<dbReference type="EC" id="7.6.2.11" evidence="1"/>
<dbReference type="EMBL" id="AE016879">
    <property type="protein sequence ID" value="AAP25251.1"/>
    <property type="status" value="ALT_INIT"/>
    <property type="molecule type" value="Genomic_DNA"/>
</dbReference>
<dbReference type="EMBL" id="AE017334">
    <property type="protein sequence ID" value="AAT30386.1"/>
    <property type="status" value="ALT_INIT"/>
    <property type="molecule type" value="Genomic_DNA"/>
</dbReference>
<dbReference type="EMBL" id="AE017225">
    <property type="protein sequence ID" value="AAT53520.1"/>
    <property type="status" value="ALT_INIT"/>
    <property type="molecule type" value="Genomic_DNA"/>
</dbReference>
<dbReference type="RefSeq" id="NP_843765.1">
    <property type="nucleotide sequence ID" value="NC_003997.3"/>
</dbReference>
<dbReference type="RefSeq" id="WP_000720330.1">
    <property type="nucleotide sequence ID" value="NZ_WXXJ01000029.1"/>
</dbReference>
<dbReference type="SMR" id="Q81TH8"/>
<dbReference type="IntAct" id="Q81TH8">
    <property type="interactions" value="1"/>
</dbReference>
<dbReference type="STRING" id="261594.GBAA_1297"/>
<dbReference type="DNASU" id="1084212"/>
<dbReference type="GeneID" id="45021292"/>
<dbReference type="KEGG" id="ban:BA_1297"/>
<dbReference type="KEGG" id="bar:GBAA_1297"/>
<dbReference type="KEGG" id="bat:BAS1199"/>
<dbReference type="PATRIC" id="fig|198094.11.peg.1270"/>
<dbReference type="eggNOG" id="COG3842">
    <property type="taxonomic scope" value="Bacteria"/>
</dbReference>
<dbReference type="HOGENOM" id="CLU_000604_1_1_9"/>
<dbReference type="OMA" id="WALFPHK"/>
<dbReference type="OrthoDB" id="9790614at2"/>
<dbReference type="Proteomes" id="UP000000427">
    <property type="component" value="Chromosome"/>
</dbReference>
<dbReference type="Proteomes" id="UP000000594">
    <property type="component" value="Chromosome"/>
</dbReference>
<dbReference type="GO" id="GO:0043190">
    <property type="term" value="C:ATP-binding cassette (ABC) transporter complex"/>
    <property type="evidence" value="ECO:0007669"/>
    <property type="project" value="InterPro"/>
</dbReference>
<dbReference type="GO" id="GO:0015594">
    <property type="term" value="F:ABC-type putrescine transporter activity"/>
    <property type="evidence" value="ECO:0007669"/>
    <property type="project" value="InterPro"/>
</dbReference>
<dbReference type="GO" id="GO:0005524">
    <property type="term" value="F:ATP binding"/>
    <property type="evidence" value="ECO:0007669"/>
    <property type="project" value="UniProtKB-KW"/>
</dbReference>
<dbReference type="GO" id="GO:0016887">
    <property type="term" value="F:ATP hydrolysis activity"/>
    <property type="evidence" value="ECO:0007669"/>
    <property type="project" value="InterPro"/>
</dbReference>
<dbReference type="CDD" id="cd03300">
    <property type="entry name" value="ABC_PotA_N"/>
    <property type="match status" value="1"/>
</dbReference>
<dbReference type="FunFam" id="3.40.50.300:FF:000133">
    <property type="entry name" value="Spermidine/putrescine import ATP-binding protein PotA"/>
    <property type="match status" value="1"/>
</dbReference>
<dbReference type="Gene3D" id="3.40.50.300">
    <property type="entry name" value="P-loop containing nucleotide triphosphate hydrolases"/>
    <property type="match status" value="1"/>
</dbReference>
<dbReference type="InterPro" id="IPR003593">
    <property type="entry name" value="AAA+_ATPase"/>
</dbReference>
<dbReference type="InterPro" id="IPR050093">
    <property type="entry name" value="ABC_SmlMolc_Importer"/>
</dbReference>
<dbReference type="InterPro" id="IPR003439">
    <property type="entry name" value="ABC_transporter-like_ATP-bd"/>
</dbReference>
<dbReference type="InterPro" id="IPR017871">
    <property type="entry name" value="ABC_transporter-like_CS"/>
</dbReference>
<dbReference type="InterPro" id="IPR008995">
    <property type="entry name" value="Mo/tungstate-bd_C_term_dom"/>
</dbReference>
<dbReference type="InterPro" id="IPR027417">
    <property type="entry name" value="P-loop_NTPase"/>
</dbReference>
<dbReference type="InterPro" id="IPR017879">
    <property type="entry name" value="PotA_ATP-bd"/>
</dbReference>
<dbReference type="InterPro" id="IPR013611">
    <property type="entry name" value="Transp-assoc_OB_typ2"/>
</dbReference>
<dbReference type="PANTHER" id="PTHR42781">
    <property type="entry name" value="SPERMIDINE/PUTRESCINE IMPORT ATP-BINDING PROTEIN POTA"/>
    <property type="match status" value="1"/>
</dbReference>
<dbReference type="PANTHER" id="PTHR42781:SF4">
    <property type="entry name" value="SPERMIDINE_PUTRESCINE IMPORT ATP-BINDING PROTEIN POTA"/>
    <property type="match status" value="1"/>
</dbReference>
<dbReference type="Pfam" id="PF00005">
    <property type="entry name" value="ABC_tran"/>
    <property type="match status" value="1"/>
</dbReference>
<dbReference type="Pfam" id="PF08402">
    <property type="entry name" value="TOBE_2"/>
    <property type="match status" value="1"/>
</dbReference>
<dbReference type="SMART" id="SM00382">
    <property type="entry name" value="AAA"/>
    <property type="match status" value="1"/>
</dbReference>
<dbReference type="SUPFAM" id="SSF50331">
    <property type="entry name" value="MOP-like"/>
    <property type="match status" value="1"/>
</dbReference>
<dbReference type="SUPFAM" id="SSF52540">
    <property type="entry name" value="P-loop containing nucleoside triphosphate hydrolases"/>
    <property type="match status" value="1"/>
</dbReference>
<dbReference type="PROSITE" id="PS00211">
    <property type="entry name" value="ABC_TRANSPORTER_1"/>
    <property type="match status" value="1"/>
</dbReference>
<dbReference type="PROSITE" id="PS50893">
    <property type="entry name" value="ABC_TRANSPORTER_2"/>
    <property type="match status" value="1"/>
</dbReference>
<dbReference type="PROSITE" id="PS51305">
    <property type="entry name" value="POTA"/>
    <property type="match status" value="1"/>
</dbReference>
<sequence>MKKIIKVEAVEKHFGNQVIIPPLSLDIKEGEFLTILGPSGCGKTTLLRMIAGFETPTKGNLLLDDEKINDLPPYKRHMNLVFQHYALFPHMNVEKNICFGMKMQKVPVAEQKERAEEAMRLTQLLEFRNRKPAKLSGGQQQRVAIARAIVNNPRVLLLDEPLGALDFKLRKDLQRELKNLQRNLGITFIYVTHDQEEAMSMSDRIVVMNKGHIEQIGTPKEIYNKPKTLFVATFIGENNIVKNGEGYVAIRPENVKVRSVEEPILKEYHLGHIEDIEFVGNMEKLYVRDEKTSELLMAYQTAEEAAQWSIGDNVYVGWEQEDEVTLN</sequence>
<evidence type="ECO:0000255" key="1">
    <source>
        <dbReference type="HAMAP-Rule" id="MF_01726"/>
    </source>
</evidence>
<evidence type="ECO:0000305" key="2"/>
<protein>
    <recommendedName>
        <fullName evidence="1">Spermidine/putrescine import ATP-binding protein PotA</fullName>
        <ecNumber evidence="1">7.6.2.11</ecNumber>
    </recommendedName>
</protein>
<feature type="chain" id="PRO_0000286191" description="Spermidine/putrescine import ATP-binding protein PotA">
    <location>
        <begin position="1"/>
        <end position="327"/>
    </location>
</feature>
<feature type="domain" description="ABC transporter" evidence="1">
    <location>
        <begin position="5"/>
        <end position="235"/>
    </location>
</feature>
<feature type="binding site" evidence="1">
    <location>
        <begin position="37"/>
        <end position="44"/>
    </location>
    <ligand>
        <name>ATP</name>
        <dbReference type="ChEBI" id="CHEBI:30616"/>
    </ligand>
</feature>
<keyword id="KW-0067">ATP-binding</keyword>
<keyword id="KW-1003">Cell membrane</keyword>
<keyword id="KW-0472">Membrane</keyword>
<keyword id="KW-0547">Nucleotide-binding</keyword>
<keyword id="KW-1185">Reference proteome</keyword>
<keyword id="KW-1278">Translocase</keyword>
<keyword id="KW-0813">Transport</keyword>
<reference key="1">
    <citation type="journal article" date="2003" name="Nature">
        <title>The genome sequence of Bacillus anthracis Ames and comparison to closely related bacteria.</title>
        <authorList>
            <person name="Read T.D."/>
            <person name="Peterson S.N."/>
            <person name="Tourasse N.J."/>
            <person name="Baillie L.W."/>
            <person name="Paulsen I.T."/>
            <person name="Nelson K.E."/>
            <person name="Tettelin H."/>
            <person name="Fouts D.E."/>
            <person name="Eisen J.A."/>
            <person name="Gill S.R."/>
            <person name="Holtzapple E.K."/>
            <person name="Okstad O.A."/>
            <person name="Helgason E."/>
            <person name="Rilstone J."/>
            <person name="Wu M."/>
            <person name="Kolonay J.F."/>
            <person name="Beanan M.J."/>
            <person name="Dodson R.J."/>
            <person name="Brinkac L.M."/>
            <person name="Gwinn M.L."/>
            <person name="DeBoy R.T."/>
            <person name="Madpu R."/>
            <person name="Daugherty S.C."/>
            <person name="Durkin A.S."/>
            <person name="Haft D.H."/>
            <person name="Nelson W.C."/>
            <person name="Peterson J.D."/>
            <person name="Pop M."/>
            <person name="Khouri H.M."/>
            <person name="Radune D."/>
            <person name="Benton J.L."/>
            <person name="Mahamoud Y."/>
            <person name="Jiang L."/>
            <person name="Hance I.R."/>
            <person name="Weidman J.F."/>
            <person name="Berry K.J."/>
            <person name="Plaut R.D."/>
            <person name="Wolf A.M."/>
            <person name="Watkins K.L."/>
            <person name="Nierman W.C."/>
            <person name="Hazen A."/>
            <person name="Cline R.T."/>
            <person name="Redmond C."/>
            <person name="Thwaite J.E."/>
            <person name="White O."/>
            <person name="Salzberg S.L."/>
            <person name="Thomason B."/>
            <person name="Friedlander A.M."/>
            <person name="Koehler T.M."/>
            <person name="Hanna P.C."/>
            <person name="Kolstoe A.-B."/>
            <person name="Fraser C.M."/>
        </authorList>
    </citation>
    <scope>NUCLEOTIDE SEQUENCE [LARGE SCALE GENOMIC DNA]</scope>
    <source>
        <strain>Ames / isolate Porton</strain>
    </source>
</reference>
<reference key="2">
    <citation type="journal article" date="2009" name="J. Bacteriol.">
        <title>The complete genome sequence of Bacillus anthracis Ames 'Ancestor'.</title>
        <authorList>
            <person name="Ravel J."/>
            <person name="Jiang L."/>
            <person name="Stanley S.T."/>
            <person name="Wilson M.R."/>
            <person name="Decker R.S."/>
            <person name="Read T.D."/>
            <person name="Worsham P."/>
            <person name="Keim P.S."/>
            <person name="Salzberg S.L."/>
            <person name="Fraser-Liggett C.M."/>
            <person name="Rasko D.A."/>
        </authorList>
    </citation>
    <scope>NUCLEOTIDE SEQUENCE [LARGE SCALE GENOMIC DNA]</scope>
    <source>
        <strain>Ames ancestor</strain>
    </source>
</reference>
<reference key="3">
    <citation type="submission" date="2004-01" db="EMBL/GenBank/DDBJ databases">
        <title>Complete genome sequence of Bacillus anthracis Sterne.</title>
        <authorList>
            <person name="Brettin T.S."/>
            <person name="Bruce D."/>
            <person name="Challacombe J.F."/>
            <person name="Gilna P."/>
            <person name="Han C."/>
            <person name="Hill K."/>
            <person name="Hitchcock P."/>
            <person name="Jackson P."/>
            <person name="Keim P."/>
            <person name="Longmire J."/>
            <person name="Lucas S."/>
            <person name="Okinaka R."/>
            <person name="Richardson P."/>
            <person name="Rubin E."/>
            <person name="Tice H."/>
        </authorList>
    </citation>
    <scope>NUCLEOTIDE SEQUENCE [LARGE SCALE GENOMIC DNA]</scope>
    <source>
        <strain>Sterne</strain>
    </source>
</reference>
<gene>
    <name evidence="1" type="primary">potA</name>
    <name type="ordered locus">BA_1297</name>
    <name type="ordered locus">GBAA_1297</name>
    <name type="ordered locus">BAS1199</name>
</gene>
<accession>Q81TH8</accession>
<accession>Q6I1R1</accession>
<accession>Q6KVK3</accession>
<name>POTA_BACAN</name>
<organism>
    <name type="scientific">Bacillus anthracis</name>
    <dbReference type="NCBI Taxonomy" id="1392"/>
    <lineage>
        <taxon>Bacteria</taxon>
        <taxon>Bacillati</taxon>
        <taxon>Bacillota</taxon>
        <taxon>Bacilli</taxon>
        <taxon>Bacillales</taxon>
        <taxon>Bacillaceae</taxon>
        <taxon>Bacillus</taxon>
        <taxon>Bacillus cereus group</taxon>
    </lineage>
</organism>
<comment type="function">
    <text evidence="1">Part of the ABC transporter complex PotABCD involved in spermidine/putrescine import. Responsible for energy coupling to the transport system.</text>
</comment>
<comment type="catalytic activity">
    <reaction evidence="1">
        <text>ATP + H2O + polyamine-[polyamine-binding protein]Side 1 = ADP + phosphate + polyamineSide 2 + [polyamine-binding protein]Side 1.</text>
        <dbReference type="EC" id="7.6.2.11"/>
    </reaction>
</comment>
<comment type="subunit">
    <text evidence="1">The complex is composed of two ATP-binding proteins (PotA), two transmembrane proteins (PotB and PotC) and a solute-binding protein (PotD).</text>
</comment>
<comment type="subcellular location">
    <subcellularLocation>
        <location evidence="1">Cell membrane</location>
        <topology evidence="1">Peripheral membrane protein</topology>
    </subcellularLocation>
</comment>
<comment type="similarity">
    <text evidence="1">Belongs to the ABC transporter superfamily. Spermidine/putrescine importer (TC 3.A.1.11.1) family.</text>
</comment>
<comment type="sequence caution" evidence="2">
    <conflict type="erroneous initiation">
        <sequence resource="EMBL-CDS" id="AAP25251"/>
    </conflict>
</comment>
<comment type="sequence caution" evidence="2">
    <conflict type="erroneous initiation">
        <sequence resource="EMBL-CDS" id="AAT30386"/>
    </conflict>
</comment>
<comment type="sequence caution" evidence="2">
    <conflict type="erroneous initiation">
        <sequence resource="EMBL-CDS" id="AAT53520"/>
    </conflict>
</comment>
<proteinExistence type="inferred from homology"/>